<keyword id="KW-1185">Reference proteome</keyword>
<sequence>MSIQRKALGNKGEEEACKYIQNLGYNIMERNYRCKIGELDIIAWDPVGMLVFLEVRSRSGRAFGVPEESVNYRKQNKLRMLAQQFLLTKSEFAKISCRFDVIGVYFNKEGSVQEIKHIKNAL</sequence>
<reference key="1">
    <citation type="submission" date="2007-03" db="EMBL/GenBank/DDBJ databases">
        <title>Complete sequence of Desulfotomaculum reducens MI-1.</title>
        <authorList>
            <consortium name="US DOE Joint Genome Institute"/>
            <person name="Copeland A."/>
            <person name="Lucas S."/>
            <person name="Lapidus A."/>
            <person name="Barry K."/>
            <person name="Detter J.C."/>
            <person name="Glavina del Rio T."/>
            <person name="Hammon N."/>
            <person name="Israni S."/>
            <person name="Dalin E."/>
            <person name="Tice H."/>
            <person name="Pitluck S."/>
            <person name="Sims D."/>
            <person name="Brettin T."/>
            <person name="Bruce D."/>
            <person name="Han C."/>
            <person name="Tapia R."/>
            <person name="Schmutz J."/>
            <person name="Larimer F."/>
            <person name="Land M."/>
            <person name="Hauser L."/>
            <person name="Kyrpides N."/>
            <person name="Kim E."/>
            <person name="Tebo B.M."/>
            <person name="Richardson P."/>
        </authorList>
    </citation>
    <scope>NUCLEOTIDE SEQUENCE [LARGE SCALE GENOMIC DNA]</scope>
    <source>
        <strain>ATCC BAA-1160 / DSM 100696 / MI-1</strain>
    </source>
</reference>
<comment type="similarity">
    <text evidence="1">Belongs to the UPF0102 family.</text>
</comment>
<organism>
    <name type="scientific">Desulforamulus reducens (strain ATCC BAA-1160 / DSM 100696 / MI-1)</name>
    <name type="common">Desulfotomaculum reducens</name>
    <dbReference type="NCBI Taxonomy" id="349161"/>
    <lineage>
        <taxon>Bacteria</taxon>
        <taxon>Bacillati</taxon>
        <taxon>Bacillota</taxon>
        <taxon>Clostridia</taxon>
        <taxon>Eubacteriales</taxon>
        <taxon>Peptococcaceae</taxon>
        <taxon>Desulforamulus</taxon>
    </lineage>
</organism>
<evidence type="ECO:0000255" key="1">
    <source>
        <dbReference type="HAMAP-Rule" id="MF_00048"/>
    </source>
</evidence>
<protein>
    <recommendedName>
        <fullName evidence="1">UPF0102 protein Dred_2035</fullName>
    </recommendedName>
</protein>
<gene>
    <name type="ordered locus">Dred_2035</name>
</gene>
<dbReference type="EMBL" id="CP000612">
    <property type="protein sequence ID" value="ABO50552.1"/>
    <property type="molecule type" value="Genomic_DNA"/>
</dbReference>
<dbReference type="RefSeq" id="WP_011878358.1">
    <property type="nucleotide sequence ID" value="NC_009253.1"/>
</dbReference>
<dbReference type="SMR" id="A4J649"/>
<dbReference type="STRING" id="349161.Dred_2035"/>
<dbReference type="KEGG" id="drm:Dred_2035"/>
<dbReference type="eggNOG" id="COG0792">
    <property type="taxonomic scope" value="Bacteria"/>
</dbReference>
<dbReference type="HOGENOM" id="CLU_115353_2_3_9"/>
<dbReference type="OrthoDB" id="9802516at2"/>
<dbReference type="Proteomes" id="UP000001556">
    <property type="component" value="Chromosome"/>
</dbReference>
<dbReference type="GO" id="GO:0003676">
    <property type="term" value="F:nucleic acid binding"/>
    <property type="evidence" value="ECO:0007669"/>
    <property type="project" value="InterPro"/>
</dbReference>
<dbReference type="CDD" id="cd20736">
    <property type="entry name" value="PoNe_Nuclease"/>
    <property type="match status" value="1"/>
</dbReference>
<dbReference type="Gene3D" id="3.40.1350.10">
    <property type="match status" value="1"/>
</dbReference>
<dbReference type="HAMAP" id="MF_00048">
    <property type="entry name" value="UPF0102"/>
    <property type="match status" value="1"/>
</dbReference>
<dbReference type="InterPro" id="IPR011335">
    <property type="entry name" value="Restrct_endonuc-II-like"/>
</dbReference>
<dbReference type="InterPro" id="IPR011856">
    <property type="entry name" value="tRNA_endonuc-like_dom_sf"/>
</dbReference>
<dbReference type="InterPro" id="IPR003509">
    <property type="entry name" value="UPF0102_YraN-like"/>
</dbReference>
<dbReference type="NCBIfam" id="NF009150">
    <property type="entry name" value="PRK12497.1-3"/>
    <property type="match status" value="1"/>
</dbReference>
<dbReference type="NCBIfam" id="NF009154">
    <property type="entry name" value="PRK12497.3-3"/>
    <property type="match status" value="1"/>
</dbReference>
<dbReference type="NCBIfam" id="TIGR00252">
    <property type="entry name" value="YraN family protein"/>
    <property type="match status" value="1"/>
</dbReference>
<dbReference type="PANTHER" id="PTHR34039">
    <property type="entry name" value="UPF0102 PROTEIN YRAN"/>
    <property type="match status" value="1"/>
</dbReference>
<dbReference type="PANTHER" id="PTHR34039:SF1">
    <property type="entry name" value="UPF0102 PROTEIN YRAN"/>
    <property type="match status" value="1"/>
</dbReference>
<dbReference type="Pfam" id="PF02021">
    <property type="entry name" value="UPF0102"/>
    <property type="match status" value="1"/>
</dbReference>
<dbReference type="SUPFAM" id="SSF52980">
    <property type="entry name" value="Restriction endonuclease-like"/>
    <property type="match status" value="1"/>
</dbReference>
<feature type="chain" id="PRO_1000074812" description="UPF0102 protein Dred_2035">
    <location>
        <begin position="1"/>
        <end position="122"/>
    </location>
</feature>
<accession>A4J649</accession>
<name>Y2035_DESRM</name>
<proteinExistence type="inferred from homology"/>